<organism>
    <name type="scientific">Clostridium botulinum (strain Loch Maree / Type A3)</name>
    <dbReference type="NCBI Taxonomy" id="498214"/>
    <lineage>
        <taxon>Bacteria</taxon>
        <taxon>Bacillati</taxon>
        <taxon>Bacillota</taxon>
        <taxon>Clostridia</taxon>
        <taxon>Eubacteriales</taxon>
        <taxon>Clostridiaceae</taxon>
        <taxon>Clostridium</taxon>
    </lineage>
</organism>
<accession>B1L1G8</accession>
<dbReference type="EC" id="6.3.5.-" evidence="1"/>
<dbReference type="EMBL" id="CP000962">
    <property type="protein sequence ID" value="ACA56873.1"/>
    <property type="molecule type" value="Genomic_DNA"/>
</dbReference>
<dbReference type="RefSeq" id="WP_012344683.1">
    <property type="nucleotide sequence ID" value="NC_010520.1"/>
</dbReference>
<dbReference type="SMR" id="B1L1G8"/>
<dbReference type="KEGG" id="cbl:CLK_2682"/>
<dbReference type="HOGENOM" id="CLU_019240_0_0_9"/>
<dbReference type="GO" id="GO:0050566">
    <property type="term" value="F:asparaginyl-tRNA synthase (glutamine-hydrolyzing) activity"/>
    <property type="evidence" value="ECO:0007669"/>
    <property type="project" value="RHEA"/>
</dbReference>
<dbReference type="GO" id="GO:0005524">
    <property type="term" value="F:ATP binding"/>
    <property type="evidence" value="ECO:0007669"/>
    <property type="project" value="UniProtKB-KW"/>
</dbReference>
<dbReference type="GO" id="GO:0050567">
    <property type="term" value="F:glutaminyl-tRNA synthase (glutamine-hydrolyzing) activity"/>
    <property type="evidence" value="ECO:0007669"/>
    <property type="project" value="UniProtKB-UniRule"/>
</dbReference>
<dbReference type="GO" id="GO:0070681">
    <property type="term" value="P:glutaminyl-tRNAGln biosynthesis via transamidation"/>
    <property type="evidence" value="ECO:0007669"/>
    <property type="project" value="TreeGrafter"/>
</dbReference>
<dbReference type="GO" id="GO:0006412">
    <property type="term" value="P:translation"/>
    <property type="evidence" value="ECO:0007669"/>
    <property type="project" value="UniProtKB-UniRule"/>
</dbReference>
<dbReference type="FunFam" id="1.10.10.410:FF:000001">
    <property type="entry name" value="Aspartyl/glutamyl-tRNA(Asn/Gln) amidotransferase subunit B"/>
    <property type="match status" value="1"/>
</dbReference>
<dbReference type="FunFam" id="1.10.150.380:FF:000001">
    <property type="entry name" value="Aspartyl/glutamyl-tRNA(Asn/Gln) amidotransferase subunit B"/>
    <property type="match status" value="1"/>
</dbReference>
<dbReference type="Gene3D" id="1.10.10.410">
    <property type="match status" value="1"/>
</dbReference>
<dbReference type="Gene3D" id="1.10.150.380">
    <property type="entry name" value="GatB domain, N-terminal subdomain"/>
    <property type="match status" value="1"/>
</dbReference>
<dbReference type="HAMAP" id="MF_00121">
    <property type="entry name" value="GatB"/>
    <property type="match status" value="1"/>
</dbReference>
<dbReference type="InterPro" id="IPR017959">
    <property type="entry name" value="Asn/Gln-tRNA_amidoTrfase_suB/E"/>
</dbReference>
<dbReference type="InterPro" id="IPR006075">
    <property type="entry name" value="Asn/Gln-tRNA_Trfase_suB/E_cat"/>
</dbReference>
<dbReference type="InterPro" id="IPR018027">
    <property type="entry name" value="Asn/Gln_amidotransferase"/>
</dbReference>
<dbReference type="InterPro" id="IPR003789">
    <property type="entry name" value="Asn/Gln_tRNA_amidoTrase-B-like"/>
</dbReference>
<dbReference type="InterPro" id="IPR004413">
    <property type="entry name" value="GatB"/>
</dbReference>
<dbReference type="InterPro" id="IPR042114">
    <property type="entry name" value="GatB_C_1"/>
</dbReference>
<dbReference type="InterPro" id="IPR023168">
    <property type="entry name" value="GatB_Yqey_C_2"/>
</dbReference>
<dbReference type="InterPro" id="IPR017958">
    <property type="entry name" value="Gln-tRNA_amidoTrfase_suB_CS"/>
</dbReference>
<dbReference type="InterPro" id="IPR014746">
    <property type="entry name" value="Gln_synth/guanido_kin_cat_dom"/>
</dbReference>
<dbReference type="NCBIfam" id="TIGR00133">
    <property type="entry name" value="gatB"/>
    <property type="match status" value="1"/>
</dbReference>
<dbReference type="NCBIfam" id="NF004012">
    <property type="entry name" value="PRK05477.1-2"/>
    <property type="match status" value="1"/>
</dbReference>
<dbReference type="NCBIfam" id="NF004014">
    <property type="entry name" value="PRK05477.1-4"/>
    <property type="match status" value="1"/>
</dbReference>
<dbReference type="PANTHER" id="PTHR11659">
    <property type="entry name" value="GLUTAMYL-TRNA GLN AMIDOTRANSFERASE SUBUNIT B MITOCHONDRIAL AND PROKARYOTIC PET112-RELATED"/>
    <property type="match status" value="1"/>
</dbReference>
<dbReference type="PANTHER" id="PTHR11659:SF0">
    <property type="entry name" value="GLUTAMYL-TRNA(GLN) AMIDOTRANSFERASE SUBUNIT B, MITOCHONDRIAL"/>
    <property type="match status" value="1"/>
</dbReference>
<dbReference type="Pfam" id="PF02934">
    <property type="entry name" value="GatB_N"/>
    <property type="match status" value="1"/>
</dbReference>
<dbReference type="Pfam" id="PF02637">
    <property type="entry name" value="GatB_Yqey"/>
    <property type="match status" value="1"/>
</dbReference>
<dbReference type="SMART" id="SM00845">
    <property type="entry name" value="GatB_Yqey"/>
    <property type="match status" value="1"/>
</dbReference>
<dbReference type="SUPFAM" id="SSF89095">
    <property type="entry name" value="GatB/YqeY motif"/>
    <property type="match status" value="1"/>
</dbReference>
<dbReference type="SUPFAM" id="SSF55931">
    <property type="entry name" value="Glutamine synthetase/guanido kinase"/>
    <property type="match status" value="1"/>
</dbReference>
<dbReference type="PROSITE" id="PS01234">
    <property type="entry name" value="GATB"/>
    <property type="match status" value="1"/>
</dbReference>
<gene>
    <name evidence="1" type="primary">gatB</name>
    <name type="ordered locus">CLK_2682</name>
</gene>
<reference key="1">
    <citation type="journal article" date="2007" name="PLoS ONE">
        <title>Analysis of the neurotoxin complex genes in Clostridium botulinum A1-A4 and B1 strains: BoNT/A3, /Ba4 and /B1 clusters are located within plasmids.</title>
        <authorList>
            <person name="Smith T.J."/>
            <person name="Hill K.K."/>
            <person name="Foley B.T."/>
            <person name="Detter J.C."/>
            <person name="Munk A.C."/>
            <person name="Bruce D.C."/>
            <person name="Doggett N.A."/>
            <person name="Smith L.A."/>
            <person name="Marks J.D."/>
            <person name="Xie G."/>
            <person name="Brettin T.S."/>
        </authorList>
    </citation>
    <scope>NUCLEOTIDE SEQUENCE [LARGE SCALE GENOMIC DNA]</scope>
    <source>
        <strain>Loch Maree / Type A3</strain>
    </source>
</reference>
<proteinExistence type="inferred from homology"/>
<name>GATB_CLOBM</name>
<keyword id="KW-0067">ATP-binding</keyword>
<keyword id="KW-0436">Ligase</keyword>
<keyword id="KW-0547">Nucleotide-binding</keyword>
<keyword id="KW-0648">Protein biosynthesis</keyword>
<protein>
    <recommendedName>
        <fullName evidence="1">Aspartyl/glutamyl-tRNA(Asn/Gln) amidotransferase subunit B</fullName>
        <shortName evidence="1">Asp/Glu-ADT subunit B</shortName>
        <ecNumber evidence="1">6.3.5.-</ecNumber>
    </recommendedName>
</protein>
<comment type="function">
    <text evidence="1">Allows the formation of correctly charged Asn-tRNA(Asn) or Gln-tRNA(Gln) through the transamidation of misacylated Asp-tRNA(Asn) or Glu-tRNA(Gln) in organisms which lack either or both of asparaginyl-tRNA or glutaminyl-tRNA synthetases. The reaction takes place in the presence of glutamine and ATP through an activated phospho-Asp-tRNA(Asn) or phospho-Glu-tRNA(Gln).</text>
</comment>
<comment type="catalytic activity">
    <reaction evidence="1">
        <text>L-glutamyl-tRNA(Gln) + L-glutamine + ATP + H2O = L-glutaminyl-tRNA(Gln) + L-glutamate + ADP + phosphate + H(+)</text>
        <dbReference type="Rhea" id="RHEA:17521"/>
        <dbReference type="Rhea" id="RHEA-COMP:9681"/>
        <dbReference type="Rhea" id="RHEA-COMP:9684"/>
        <dbReference type="ChEBI" id="CHEBI:15377"/>
        <dbReference type="ChEBI" id="CHEBI:15378"/>
        <dbReference type="ChEBI" id="CHEBI:29985"/>
        <dbReference type="ChEBI" id="CHEBI:30616"/>
        <dbReference type="ChEBI" id="CHEBI:43474"/>
        <dbReference type="ChEBI" id="CHEBI:58359"/>
        <dbReference type="ChEBI" id="CHEBI:78520"/>
        <dbReference type="ChEBI" id="CHEBI:78521"/>
        <dbReference type="ChEBI" id="CHEBI:456216"/>
    </reaction>
</comment>
<comment type="catalytic activity">
    <reaction evidence="1">
        <text>L-aspartyl-tRNA(Asn) + L-glutamine + ATP + H2O = L-asparaginyl-tRNA(Asn) + L-glutamate + ADP + phosphate + 2 H(+)</text>
        <dbReference type="Rhea" id="RHEA:14513"/>
        <dbReference type="Rhea" id="RHEA-COMP:9674"/>
        <dbReference type="Rhea" id="RHEA-COMP:9677"/>
        <dbReference type="ChEBI" id="CHEBI:15377"/>
        <dbReference type="ChEBI" id="CHEBI:15378"/>
        <dbReference type="ChEBI" id="CHEBI:29985"/>
        <dbReference type="ChEBI" id="CHEBI:30616"/>
        <dbReference type="ChEBI" id="CHEBI:43474"/>
        <dbReference type="ChEBI" id="CHEBI:58359"/>
        <dbReference type="ChEBI" id="CHEBI:78515"/>
        <dbReference type="ChEBI" id="CHEBI:78516"/>
        <dbReference type="ChEBI" id="CHEBI:456216"/>
    </reaction>
</comment>
<comment type="subunit">
    <text evidence="1">Heterotrimer of A, B and C subunits.</text>
</comment>
<comment type="similarity">
    <text evidence="1">Belongs to the GatB/GatE family. GatB subfamily.</text>
</comment>
<evidence type="ECO:0000255" key="1">
    <source>
        <dbReference type="HAMAP-Rule" id="MF_00121"/>
    </source>
</evidence>
<sequence length="476" mass="53688">MDFEAVIGLEVHAELSTNTKIYCGCTTEFGGQPNTHVCPICLGLPGSLPQLNKRVVEYGIKAGLALNCSINKVCRMDRKNYFYPDCPKNYQITQDEVPICRDGYIEIELENGEKKRIGIERIHMEEDAGKLLHTNAGTLVDYNRAGVPLIEIVSRPDIRTPEEATKYLEKLKSILSSIEVSDCKMEQGSLRCDGNISVMPKGSEKFGVRSEIKNMNSFKALEKALSYEYDRHVEAVTKGETLEQETRRWDEANSVTVLMRSKEKANDYRYFPEGDLVTLNISDEWIEEVRKTIPELPHEKAERFVNEFGIPKYDAMVLTLTMDMAKFFEETAVKSEDAKAASNWLMGDISRLMNEKTIEVKNLKFNPEQLAQLIKLINAGTISNNIGKKVLDDMFKSGKNPKDIVEEKGLVQNNDEGAILEVVKKIIENNPQSIEDFKNGKKRALGFLVGLVMKETKGKANPQIVNKVVSEEANKM</sequence>
<feature type="chain" id="PRO_1000095205" description="Aspartyl/glutamyl-tRNA(Asn/Gln) amidotransferase subunit B">
    <location>
        <begin position="1"/>
        <end position="476"/>
    </location>
</feature>